<evidence type="ECO:0000256" key="1">
    <source>
        <dbReference type="SAM" id="MobiDB-lite"/>
    </source>
</evidence>
<keyword id="KW-1185">Reference proteome</keyword>
<name>Y705_DEIRA</name>
<feature type="chain" id="PRO_0000107360" description="Uncharacterized protein DR_0705">
    <location>
        <begin position="1"/>
        <end position="308"/>
    </location>
</feature>
<feature type="region of interest" description="Disordered" evidence="1">
    <location>
        <begin position="19"/>
        <end position="43"/>
    </location>
</feature>
<feature type="compositionally biased region" description="Pro residues" evidence="1">
    <location>
        <begin position="29"/>
        <end position="43"/>
    </location>
</feature>
<sequence length="308" mass="33666">MKPLLCSLLLLSACAGPSEPQASGAGPAQTPPPVTVPMTPPSKKPALSAVQHWGVQLTGYGQTRLNAVHTSPFELVVVDPFDDDGTPWPAAEVRAAAQGRWLIAYLSMGAAESYRSYWQKGWKVGAPAWLLNEDPDWPGNFDVAYWDPAWQAIALAQLDRVIAQGFDGVYMDLIDAYQRHDNRPGARAEMVAWVCKIAAHARAQNPQFVIIPQNAAELIRDPGYAACVDASGNEETYVYAANRPTEAARQRELLASYRLWQQAGKPVFTIEYANQPALMKSAAERARAAGLIPYVGERSLDKLILNQP</sequence>
<reference key="1">
    <citation type="journal article" date="1999" name="Science">
        <title>Genome sequence of the radioresistant bacterium Deinococcus radiodurans R1.</title>
        <authorList>
            <person name="White O."/>
            <person name="Eisen J.A."/>
            <person name="Heidelberg J.F."/>
            <person name="Hickey E.K."/>
            <person name="Peterson J.D."/>
            <person name="Dodson R.J."/>
            <person name="Haft D.H."/>
            <person name="Gwinn M.L."/>
            <person name="Nelson W.C."/>
            <person name="Richardson D.L."/>
            <person name="Moffat K.S."/>
            <person name="Qin H."/>
            <person name="Jiang L."/>
            <person name="Pamphile W."/>
            <person name="Crosby M."/>
            <person name="Shen M."/>
            <person name="Vamathevan J.J."/>
            <person name="Lam P."/>
            <person name="McDonald L.A."/>
            <person name="Utterback T.R."/>
            <person name="Zalewski C."/>
            <person name="Makarova K.S."/>
            <person name="Aravind L."/>
            <person name="Daly M.J."/>
            <person name="Minton K.W."/>
            <person name="Fleischmann R.D."/>
            <person name="Ketchum K.A."/>
            <person name="Nelson K.E."/>
            <person name="Salzberg S.L."/>
            <person name="Smith H.O."/>
            <person name="Venter J.C."/>
            <person name="Fraser C.M."/>
        </authorList>
    </citation>
    <scope>NUCLEOTIDE SEQUENCE [LARGE SCALE GENOMIC DNA]</scope>
    <source>
        <strain>ATCC 13939 / DSM 20539 / JCM 16871 / CCUG 27074 / LMG 4051 / NBRC 15346 / NCIMB 9279 / VKM B-1422 / R1</strain>
    </source>
</reference>
<dbReference type="EMBL" id="AE000513">
    <property type="protein sequence ID" value="AAF10284.1"/>
    <property type="molecule type" value="Genomic_DNA"/>
</dbReference>
<dbReference type="PIR" id="F75485">
    <property type="entry name" value="F75485"/>
</dbReference>
<dbReference type="RefSeq" id="NP_294428.1">
    <property type="nucleotide sequence ID" value="NC_001263.1"/>
</dbReference>
<dbReference type="RefSeq" id="WP_010887350.1">
    <property type="nucleotide sequence ID" value="NC_001263.1"/>
</dbReference>
<dbReference type="SMR" id="Q9RWG3"/>
<dbReference type="STRING" id="243230.DR_0705"/>
<dbReference type="PaxDb" id="243230-DR_0705"/>
<dbReference type="EnsemblBacteria" id="AAF10284">
    <property type="protein sequence ID" value="AAF10284"/>
    <property type="gene ID" value="DR_0705"/>
</dbReference>
<dbReference type="GeneID" id="69516952"/>
<dbReference type="KEGG" id="dra:DR_0705"/>
<dbReference type="PATRIC" id="fig|243230.17.peg.883"/>
<dbReference type="eggNOG" id="COG2342">
    <property type="taxonomic scope" value="Bacteria"/>
</dbReference>
<dbReference type="HOGENOM" id="CLU_058176_1_0_0"/>
<dbReference type="InParanoid" id="Q9RWG3"/>
<dbReference type="OrthoDB" id="30037at2"/>
<dbReference type="Proteomes" id="UP000002524">
    <property type="component" value="Chromosome 1"/>
</dbReference>
<dbReference type="Gene3D" id="3.20.20.70">
    <property type="entry name" value="Aldolase class I"/>
    <property type="match status" value="1"/>
</dbReference>
<dbReference type="InterPro" id="IPR013785">
    <property type="entry name" value="Aldolase_TIM"/>
</dbReference>
<dbReference type="InterPro" id="IPR004352">
    <property type="entry name" value="GH114_TIM-barrel"/>
</dbReference>
<dbReference type="InterPro" id="IPR017853">
    <property type="entry name" value="Glycoside_hydrolase_SF"/>
</dbReference>
<dbReference type="InterPro" id="IPR016062">
    <property type="entry name" value="TM1410-rel"/>
</dbReference>
<dbReference type="InterPro" id="IPR016063">
    <property type="entry name" value="TM1410_Glycdase"/>
</dbReference>
<dbReference type="NCBIfam" id="TIGR01370">
    <property type="entry name" value="MJ1477/TM1410 family putative glycoside hydrolase"/>
    <property type="match status" value="1"/>
</dbReference>
<dbReference type="PANTHER" id="PTHR35882:SF1">
    <property type="match status" value="1"/>
</dbReference>
<dbReference type="PANTHER" id="PTHR35882">
    <property type="entry name" value="PELA"/>
    <property type="match status" value="1"/>
</dbReference>
<dbReference type="Pfam" id="PF03537">
    <property type="entry name" value="Glyco_hydro_114"/>
    <property type="match status" value="1"/>
</dbReference>
<dbReference type="PRINTS" id="PR01545">
    <property type="entry name" value="THEMAYE10DUF"/>
</dbReference>
<dbReference type="SUPFAM" id="SSF51445">
    <property type="entry name" value="(Trans)glycosidases"/>
    <property type="match status" value="1"/>
</dbReference>
<proteinExistence type="predicted"/>
<gene>
    <name type="ordered locus">DR_0705</name>
</gene>
<accession>Q9RWG3</accession>
<protein>
    <recommendedName>
        <fullName>Uncharacterized protein DR_0705</fullName>
    </recommendedName>
</protein>
<organism>
    <name type="scientific">Deinococcus radiodurans (strain ATCC 13939 / DSM 20539 / JCM 16871 / CCUG 27074 / LMG 4051 / NBRC 15346 / NCIMB 9279 / VKM B-1422 / R1)</name>
    <dbReference type="NCBI Taxonomy" id="243230"/>
    <lineage>
        <taxon>Bacteria</taxon>
        <taxon>Thermotogati</taxon>
        <taxon>Deinococcota</taxon>
        <taxon>Deinococci</taxon>
        <taxon>Deinococcales</taxon>
        <taxon>Deinococcaceae</taxon>
        <taxon>Deinococcus</taxon>
    </lineage>
</organism>